<dbReference type="EC" id="6.3.1.2" evidence="12"/>
<dbReference type="EC" id="2.3.1.225" evidence="19"/>
<dbReference type="EMBL" id="Y00387">
    <property type="protein sequence ID" value="CAA68457.1"/>
    <property type="molecule type" value="mRNA"/>
</dbReference>
<dbReference type="EMBL" id="X59834">
    <property type="protein sequence ID" value="CAA42495.1"/>
    <property type="molecule type" value="mRNA"/>
</dbReference>
<dbReference type="EMBL" id="S70290">
    <property type="protein sequence ID" value="AAB30693.1"/>
    <property type="molecule type" value="mRNA"/>
</dbReference>
<dbReference type="EMBL" id="AY486122">
    <property type="protein sequence ID" value="AAS57904.1"/>
    <property type="molecule type" value="mRNA"/>
</dbReference>
<dbReference type="EMBL" id="AY486123">
    <property type="protein sequence ID" value="AAS57905.1"/>
    <property type="molecule type" value="Genomic_DNA"/>
</dbReference>
<dbReference type="EMBL" id="BX537384">
    <property type="protein sequence ID" value="CAD97626.1"/>
    <property type="molecule type" value="mRNA"/>
</dbReference>
<dbReference type="EMBL" id="AL139344">
    <property type="status" value="NOT_ANNOTATED_CDS"/>
    <property type="molecule type" value="Genomic_DNA"/>
</dbReference>
<dbReference type="EMBL" id="BC010037">
    <property type="protein sequence ID" value="AAH10037.1"/>
    <property type="molecule type" value="mRNA"/>
</dbReference>
<dbReference type="EMBL" id="BC011700">
    <property type="protein sequence ID" value="AAH11700.1"/>
    <property type="molecule type" value="mRNA"/>
</dbReference>
<dbReference type="EMBL" id="BC011852">
    <property type="protein sequence ID" value="AAH11852.1"/>
    <property type="molecule type" value="mRNA"/>
</dbReference>
<dbReference type="EMBL" id="BC018992">
    <property type="protein sequence ID" value="AAH18992.1"/>
    <property type="molecule type" value="mRNA"/>
</dbReference>
<dbReference type="EMBL" id="BC031964">
    <property type="protein sequence ID" value="AAH31964.1"/>
    <property type="molecule type" value="mRNA"/>
</dbReference>
<dbReference type="EMBL" id="BC051726">
    <property type="protein sequence ID" value="AAH51726.1"/>
    <property type="molecule type" value="mRNA"/>
</dbReference>
<dbReference type="CCDS" id="CCDS1344.1"/>
<dbReference type="PIR" id="S18455">
    <property type="entry name" value="AJHUQ"/>
</dbReference>
<dbReference type="RefSeq" id="NP_001028216.1">
    <property type="nucleotide sequence ID" value="NM_001033044.4"/>
</dbReference>
<dbReference type="RefSeq" id="NP_001028228.1">
    <property type="nucleotide sequence ID" value="NM_001033056.4"/>
</dbReference>
<dbReference type="RefSeq" id="NP_002056.2">
    <property type="nucleotide sequence ID" value="NM_002065.6"/>
</dbReference>
<dbReference type="RefSeq" id="XP_006711341.1">
    <property type="nucleotide sequence ID" value="XM_006711278.1"/>
</dbReference>
<dbReference type="PDB" id="2OJW">
    <property type="method" value="X-ray"/>
    <property type="resolution" value="2.05 A"/>
    <property type="chains" value="A/B/C/D/E=5-365"/>
</dbReference>
<dbReference type="PDB" id="2QC8">
    <property type="method" value="X-ray"/>
    <property type="resolution" value="2.60 A"/>
    <property type="chains" value="A/B/C/D/E/F/G/H/I/J=5-365"/>
</dbReference>
<dbReference type="PDB" id="7EVT">
    <property type="method" value="X-ray"/>
    <property type="resolution" value="2.95 A"/>
    <property type="chains" value="A/B/C/D/E/F/G/H/I/J=23-373"/>
</dbReference>
<dbReference type="PDB" id="8DNU">
    <property type="method" value="EM"/>
    <property type="resolution" value="2.73 A"/>
    <property type="chains" value="A/B/C/D/E/F/G/H/I/J=1-373"/>
</dbReference>
<dbReference type="PDBsum" id="2OJW"/>
<dbReference type="PDBsum" id="2QC8"/>
<dbReference type="PDBsum" id="7EVT"/>
<dbReference type="PDBsum" id="8DNU"/>
<dbReference type="EMDB" id="EMD-27580"/>
<dbReference type="SMR" id="P15104"/>
<dbReference type="BioGRID" id="109014">
    <property type="interactions" value="174"/>
</dbReference>
<dbReference type="DIP" id="DIP-308N"/>
<dbReference type="FunCoup" id="P15104">
    <property type="interactions" value="2800"/>
</dbReference>
<dbReference type="IntAct" id="P15104">
    <property type="interactions" value="92"/>
</dbReference>
<dbReference type="MINT" id="P15104"/>
<dbReference type="STRING" id="9606.ENSP00000307900"/>
<dbReference type="BindingDB" id="P15104"/>
<dbReference type="ChEMBL" id="CHEMBL4612"/>
<dbReference type="DrugBank" id="DB11118">
    <property type="generic name" value="Ammonia"/>
</dbReference>
<dbReference type="DrugBank" id="DB06774">
    <property type="generic name" value="Capsaicin"/>
</dbReference>
<dbReference type="DrugBank" id="DB01212">
    <property type="generic name" value="Ceftriaxone"/>
</dbReference>
<dbReference type="DrugBank" id="DB08794">
    <property type="generic name" value="Ethyl biscoumacetate"/>
</dbReference>
<dbReference type="DrugBank" id="DB00142">
    <property type="generic name" value="Glutamic acid"/>
</dbReference>
<dbReference type="DrugBank" id="DB00130">
    <property type="generic name" value="L-Glutamine"/>
</dbReference>
<dbReference type="DrugBank" id="DB06757">
    <property type="generic name" value="Manganese cation"/>
</dbReference>
<dbReference type="DrugBank" id="DB00134">
    <property type="generic name" value="Methionine"/>
</dbReference>
<dbReference type="DrugBank" id="DB00082">
    <property type="generic name" value="Pegvisomant"/>
</dbReference>
<dbReference type="DrugBank" id="DB00466">
    <property type="generic name" value="Picrotoxin"/>
</dbReference>
<dbReference type="DrugCentral" id="P15104"/>
<dbReference type="GlyGen" id="P15104">
    <property type="glycosylation" value="3 sites, 1 O-linked glycan (2 sites)"/>
</dbReference>
<dbReference type="iPTMnet" id="P15104"/>
<dbReference type="PhosphoSitePlus" id="P15104"/>
<dbReference type="BioMuta" id="GLUL"/>
<dbReference type="REPRODUCTION-2DPAGE" id="IPI00010130"/>
<dbReference type="jPOST" id="P15104"/>
<dbReference type="MassIVE" id="P15104"/>
<dbReference type="PaxDb" id="9606-ENSP00000307900"/>
<dbReference type="PeptideAtlas" id="P15104"/>
<dbReference type="PRIDE" id="P15104"/>
<dbReference type="ProteomicsDB" id="53107"/>
<dbReference type="Pumba" id="P15104"/>
<dbReference type="Antibodypedia" id="1536">
    <property type="antibodies" value="766 antibodies from 43 providers"/>
</dbReference>
<dbReference type="DNASU" id="2752"/>
<dbReference type="Ensembl" id="ENST00000311223.9">
    <property type="protein sequence ID" value="ENSP00000307900.5"/>
    <property type="gene ID" value="ENSG00000135821.20"/>
</dbReference>
<dbReference type="Ensembl" id="ENST00000331872.11">
    <property type="protein sequence ID" value="ENSP00000356537.6"/>
    <property type="gene ID" value="ENSG00000135821.20"/>
</dbReference>
<dbReference type="Ensembl" id="ENST00000417584.6">
    <property type="protein sequence ID" value="ENSP00000398320.2"/>
    <property type="gene ID" value="ENSG00000135821.20"/>
</dbReference>
<dbReference type="GeneID" id="2752"/>
<dbReference type="KEGG" id="hsa:2752"/>
<dbReference type="MANE-Select" id="ENST00000331872.11">
    <property type="protein sequence ID" value="ENSP00000356537.6"/>
    <property type="RefSeq nucleotide sequence ID" value="NM_001033044.4"/>
    <property type="RefSeq protein sequence ID" value="NP_001028216.1"/>
</dbReference>
<dbReference type="UCSC" id="uc001gpa.3">
    <property type="organism name" value="human"/>
</dbReference>
<dbReference type="AGR" id="HGNC:4341"/>
<dbReference type="CTD" id="2752"/>
<dbReference type="DisGeNET" id="2752"/>
<dbReference type="GeneCards" id="GLUL"/>
<dbReference type="HGNC" id="HGNC:4341">
    <property type="gene designation" value="GLUL"/>
</dbReference>
<dbReference type="HPA" id="ENSG00000135821">
    <property type="expression patterns" value="Tissue enhanced (skeletal)"/>
</dbReference>
<dbReference type="MalaCards" id="GLUL"/>
<dbReference type="MIM" id="138290">
    <property type="type" value="gene"/>
</dbReference>
<dbReference type="MIM" id="610015">
    <property type="type" value="phenotype"/>
</dbReference>
<dbReference type="MIM" id="620806">
    <property type="type" value="phenotype"/>
</dbReference>
<dbReference type="neXtProt" id="NX_P15104"/>
<dbReference type="OpenTargets" id="ENSG00000135821"/>
<dbReference type="Orphanet" id="71278">
    <property type="disease" value="Congenital brain dysgenesis due to glutamine synthetase deficiency"/>
</dbReference>
<dbReference type="PharmGKB" id="PA28743"/>
<dbReference type="VEuPathDB" id="HostDB:ENSG00000135821"/>
<dbReference type="eggNOG" id="KOG0683">
    <property type="taxonomic scope" value="Eukaryota"/>
</dbReference>
<dbReference type="GeneTree" id="ENSGT00390000010047"/>
<dbReference type="HOGENOM" id="CLU_036762_1_1_1"/>
<dbReference type="InParanoid" id="P15104"/>
<dbReference type="OMA" id="DRRPNAN"/>
<dbReference type="OrthoDB" id="1936100at2759"/>
<dbReference type="PAN-GO" id="P15104">
    <property type="GO annotations" value="3 GO annotations based on evolutionary models"/>
</dbReference>
<dbReference type="PhylomeDB" id="P15104"/>
<dbReference type="TreeFam" id="TF300491"/>
<dbReference type="BioCyc" id="MetaCyc:HS06066-MONOMER"/>
<dbReference type="BRENDA" id="6.3.1.2">
    <property type="organism ID" value="2681"/>
</dbReference>
<dbReference type="PathwayCommons" id="P15104"/>
<dbReference type="Reactome" id="R-HSA-210455">
    <property type="pathway name" value="Astrocytic Glutamate-Glutamine Uptake And Metabolism"/>
</dbReference>
<dbReference type="Reactome" id="R-HSA-8964539">
    <property type="pathway name" value="Glutamate and glutamine metabolism"/>
</dbReference>
<dbReference type="SABIO-RK" id="P15104"/>
<dbReference type="SignaLink" id="P15104"/>
<dbReference type="SIGNOR" id="P15104"/>
<dbReference type="BioGRID-ORCS" id="2752">
    <property type="hits" value="36 hits in 1161 CRISPR screens"/>
</dbReference>
<dbReference type="CD-CODE" id="FB4E32DD">
    <property type="entry name" value="Presynaptic clusters and postsynaptic densities"/>
</dbReference>
<dbReference type="ChiTaRS" id="GLUL">
    <property type="organism name" value="human"/>
</dbReference>
<dbReference type="EvolutionaryTrace" id="P15104"/>
<dbReference type="GenomeRNAi" id="2752"/>
<dbReference type="Pharos" id="P15104">
    <property type="development level" value="Tchem"/>
</dbReference>
<dbReference type="PRO" id="PR:P15104"/>
<dbReference type="Proteomes" id="UP000005640">
    <property type="component" value="Chromosome 1"/>
</dbReference>
<dbReference type="RNAct" id="P15104">
    <property type="molecule type" value="protein"/>
</dbReference>
<dbReference type="Bgee" id="ENSG00000135821">
    <property type="expression patterns" value="Expressed in endothelial cell and 206 other cell types or tissues"/>
</dbReference>
<dbReference type="ExpressionAtlas" id="P15104">
    <property type="expression patterns" value="baseline and differential"/>
</dbReference>
<dbReference type="GO" id="GO:0044297">
    <property type="term" value="C:cell body"/>
    <property type="evidence" value="ECO:0007669"/>
    <property type="project" value="Ensembl"/>
</dbReference>
<dbReference type="GO" id="GO:0005737">
    <property type="term" value="C:cytoplasm"/>
    <property type="evidence" value="ECO:0000318"/>
    <property type="project" value="GO_Central"/>
</dbReference>
<dbReference type="GO" id="GO:0005829">
    <property type="term" value="C:cytosol"/>
    <property type="evidence" value="ECO:0000314"/>
    <property type="project" value="UniProtKB"/>
</dbReference>
<dbReference type="GO" id="GO:0005783">
    <property type="term" value="C:endoplasmic reticulum"/>
    <property type="evidence" value="ECO:0007669"/>
    <property type="project" value="UniProtKB-KW"/>
</dbReference>
<dbReference type="GO" id="GO:0070062">
    <property type="term" value="C:extracellular exosome"/>
    <property type="evidence" value="ECO:0007005"/>
    <property type="project" value="UniProtKB"/>
</dbReference>
<dbReference type="GO" id="GO:0097386">
    <property type="term" value="C:glial cell projection"/>
    <property type="evidence" value="ECO:0007669"/>
    <property type="project" value="Ensembl"/>
</dbReference>
<dbReference type="GO" id="GO:0005739">
    <property type="term" value="C:mitochondrion"/>
    <property type="evidence" value="ECO:0007669"/>
    <property type="project" value="UniProtKB-SubCell"/>
</dbReference>
<dbReference type="GO" id="GO:0005634">
    <property type="term" value="C:nucleus"/>
    <property type="evidence" value="ECO:0007005"/>
    <property type="project" value="UniProtKB"/>
</dbReference>
<dbReference type="GO" id="GO:0005886">
    <property type="term" value="C:plasma membrane"/>
    <property type="evidence" value="ECO:0000314"/>
    <property type="project" value="UniProtKB"/>
</dbReference>
<dbReference type="GO" id="GO:0005524">
    <property type="term" value="F:ATP binding"/>
    <property type="evidence" value="ECO:0007669"/>
    <property type="project" value="UniProtKB-KW"/>
</dbReference>
<dbReference type="GO" id="GO:0004356">
    <property type="term" value="F:glutamine synthetase activity"/>
    <property type="evidence" value="ECO:0000314"/>
    <property type="project" value="UniProtKB"/>
</dbReference>
<dbReference type="GO" id="GO:0042802">
    <property type="term" value="F:identical protein binding"/>
    <property type="evidence" value="ECO:0000353"/>
    <property type="project" value="IntAct"/>
</dbReference>
<dbReference type="GO" id="GO:0046872">
    <property type="term" value="F:metal ion binding"/>
    <property type="evidence" value="ECO:0007669"/>
    <property type="project" value="UniProtKB-KW"/>
</dbReference>
<dbReference type="GO" id="GO:0019706">
    <property type="term" value="F:protein-cysteine S-palmitoyltransferase activity"/>
    <property type="evidence" value="ECO:0000314"/>
    <property type="project" value="UniProtKB"/>
</dbReference>
<dbReference type="GO" id="GO:0001525">
    <property type="term" value="P:angiogenesis"/>
    <property type="evidence" value="ECO:0007669"/>
    <property type="project" value="UniProtKB-KW"/>
</dbReference>
<dbReference type="GO" id="GO:0008283">
    <property type="term" value="P:cell population proliferation"/>
    <property type="evidence" value="ECO:0000314"/>
    <property type="project" value="UniProtKB"/>
</dbReference>
<dbReference type="GO" id="GO:0009267">
    <property type="term" value="P:cellular response to starvation"/>
    <property type="evidence" value="ECO:0007669"/>
    <property type="project" value="Ensembl"/>
</dbReference>
<dbReference type="GO" id="GO:0006538">
    <property type="term" value="P:glutamate catabolic process"/>
    <property type="evidence" value="ECO:0000304"/>
    <property type="project" value="BHF-UCL"/>
</dbReference>
<dbReference type="GO" id="GO:0006542">
    <property type="term" value="P:glutamine biosynthetic process"/>
    <property type="evidence" value="ECO:0000318"/>
    <property type="project" value="GO_Central"/>
</dbReference>
<dbReference type="GO" id="GO:0097275">
    <property type="term" value="P:intracellular ammonium homeostasis"/>
    <property type="evidence" value="ECO:0000250"/>
    <property type="project" value="UniProtKB"/>
</dbReference>
<dbReference type="GO" id="GO:0045648">
    <property type="term" value="P:positive regulation of erythrocyte differentiation"/>
    <property type="evidence" value="ECO:0000250"/>
    <property type="project" value="UniProtKB"/>
</dbReference>
<dbReference type="GO" id="GO:0018345">
    <property type="term" value="P:protein palmitoylation"/>
    <property type="evidence" value="ECO:0000314"/>
    <property type="project" value="UniProtKB"/>
</dbReference>
<dbReference type="GO" id="GO:0010594">
    <property type="term" value="P:regulation of endothelial cell migration"/>
    <property type="evidence" value="ECO:0000314"/>
    <property type="project" value="UniProtKB"/>
</dbReference>
<dbReference type="GO" id="GO:1904749">
    <property type="term" value="P:regulation of protein localization to nucleolus"/>
    <property type="evidence" value="ECO:0000315"/>
    <property type="project" value="UniProtKB"/>
</dbReference>
<dbReference type="GO" id="GO:1903670">
    <property type="term" value="P:regulation of sprouting angiogenesis"/>
    <property type="evidence" value="ECO:0000314"/>
    <property type="project" value="UniProtKB"/>
</dbReference>
<dbReference type="GO" id="GO:0009749">
    <property type="term" value="P:response to glucose"/>
    <property type="evidence" value="ECO:0007669"/>
    <property type="project" value="Ensembl"/>
</dbReference>
<dbReference type="GO" id="GO:0042254">
    <property type="term" value="P:ribosome biogenesis"/>
    <property type="evidence" value="ECO:0000315"/>
    <property type="project" value="UniProtKB"/>
</dbReference>
<dbReference type="FunFam" id="3.10.20.70:FF:000004">
    <property type="entry name" value="Glutamine synthetase"/>
    <property type="match status" value="1"/>
</dbReference>
<dbReference type="FunFam" id="3.30.590.10:FF:000011">
    <property type="entry name" value="Glutamine synthetase"/>
    <property type="match status" value="1"/>
</dbReference>
<dbReference type="Gene3D" id="3.10.20.70">
    <property type="entry name" value="Glutamine synthetase, N-terminal domain"/>
    <property type="match status" value="1"/>
</dbReference>
<dbReference type="Gene3D" id="3.30.590.10">
    <property type="entry name" value="Glutamine synthetase/guanido kinase, catalytic domain"/>
    <property type="match status" value="2"/>
</dbReference>
<dbReference type="InterPro" id="IPR008147">
    <property type="entry name" value="Gln_synt_N"/>
</dbReference>
<dbReference type="InterPro" id="IPR036651">
    <property type="entry name" value="Gln_synt_N_sf"/>
</dbReference>
<dbReference type="InterPro" id="IPR014746">
    <property type="entry name" value="Gln_synth/guanido_kin_cat_dom"/>
</dbReference>
<dbReference type="InterPro" id="IPR008146">
    <property type="entry name" value="Gln_synth_cat_dom"/>
</dbReference>
<dbReference type="InterPro" id="IPR027303">
    <property type="entry name" value="Gln_synth_gly_rich_site"/>
</dbReference>
<dbReference type="InterPro" id="IPR027302">
    <property type="entry name" value="Gln_synth_N_conserv_site"/>
</dbReference>
<dbReference type="InterPro" id="IPR050292">
    <property type="entry name" value="Glutamine_Synthetase"/>
</dbReference>
<dbReference type="PANTHER" id="PTHR20852">
    <property type="entry name" value="GLUTAMINE SYNTHETASE"/>
    <property type="match status" value="1"/>
</dbReference>
<dbReference type="PANTHER" id="PTHR20852:SF45">
    <property type="entry name" value="GLUTAMINE SYNTHETASE"/>
    <property type="match status" value="1"/>
</dbReference>
<dbReference type="Pfam" id="PF00120">
    <property type="entry name" value="Gln-synt_C"/>
    <property type="match status" value="1"/>
</dbReference>
<dbReference type="Pfam" id="PF03951">
    <property type="entry name" value="Gln-synt_N"/>
    <property type="match status" value="1"/>
</dbReference>
<dbReference type="SMART" id="SM01230">
    <property type="entry name" value="Gln-synt_C"/>
    <property type="match status" value="1"/>
</dbReference>
<dbReference type="SUPFAM" id="SSF54368">
    <property type="entry name" value="Glutamine synthetase, N-terminal domain"/>
    <property type="match status" value="1"/>
</dbReference>
<dbReference type="SUPFAM" id="SSF55931">
    <property type="entry name" value="Glutamine synthetase/guanido kinase"/>
    <property type="match status" value="1"/>
</dbReference>
<dbReference type="PROSITE" id="PS00180">
    <property type="entry name" value="GLNA_1"/>
    <property type="match status" value="1"/>
</dbReference>
<dbReference type="PROSITE" id="PS00181">
    <property type="entry name" value="GLNA_ATP"/>
    <property type="match status" value="1"/>
</dbReference>
<dbReference type="PROSITE" id="PS51986">
    <property type="entry name" value="GS_BETA_GRASP"/>
    <property type="match status" value="1"/>
</dbReference>
<dbReference type="PROSITE" id="PS51987">
    <property type="entry name" value="GS_CATALYTIC"/>
    <property type="match status" value="1"/>
</dbReference>
<reference key="1">
    <citation type="journal article" date="1987" name="Nucleic Acids Res.">
        <title>Sequence of a human glutamine synthetase cDNA.</title>
        <authorList>
            <person name="Gibbs C.S."/>
            <person name="Campbell K.E."/>
            <person name="Wilson R.H."/>
        </authorList>
    </citation>
    <scope>NUCLEOTIDE SEQUENCE [MRNA]</scope>
    <source>
        <tissue>Liver</tissue>
    </source>
</reference>
<reference key="2">
    <citation type="journal article" date="1991" name="Biochim. Biophys. Acta">
        <title>cDNA sequence of the long mRNA for human glutamine synthase.</title>
        <authorList>
            <person name="van den Hoff M.J.B."/>
            <person name="Geerts W.J.C."/>
            <person name="Das A.T."/>
            <person name="Moorman A.F.M."/>
            <person name="Lamers W.H."/>
        </authorList>
    </citation>
    <scope>NUCLEOTIDE SEQUENCE [MRNA]</scope>
    <source>
        <tissue>Liver</tissue>
    </source>
</reference>
<reference key="3">
    <citation type="journal article" date="1994" name="Gastroenterology">
        <title>Overexpression of glutamine synthetase in human primary liver cancer.</title>
        <authorList>
            <person name="Christa L."/>
            <person name="Simon M.T."/>
            <person name="Flinois J.P."/>
            <person name="Gebhardt R."/>
            <person name="Brechot C."/>
            <person name="Lasserre C."/>
        </authorList>
    </citation>
    <scope>NUCLEOTIDE SEQUENCE [MRNA]</scope>
    <source>
        <tissue>Liver</tissue>
    </source>
</reference>
<reference key="4">
    <citation type="submission" date="2003-11" db="EMBL/GenBank/DDBJ databases">
        <authorList>
            <person name="Haberle J."/>
            <person name="Koch H.G."/>
        </authorList>
    </citation>
    <scope>NUCLEOTIDE SEQUENCE [GENOMIC DNA / MRNA]</scope>
</reference>
<reference key="5">
    <citation type="journal article" date="2007" name="BMC Genomics">
        <title>The full-ORF clone resource of the German cDNA consortium.</title>
        <authorList>
            <person name="Bechtel S."/>
            <person name="Rosenfelder H."/>
            <person name="Duda A."/>
            <person name="Schmidt C.P."/>
            <person name="Ernst U."/>
            <person name="Wellenreuther R."/>
            <person name="Mehrle A."/>
            <person name="Schuster C."/>
            <person name="Bahr A."/>
            <person name="Bloecker H."/>
            <person name="Heubner D."/>
            <person name="Hoerlein A."/>
            <person name="Michel G."/>
            <person name="Wedler H."/>
            <person name="Koehrer K."/>
            <person name="Ottenwaelder B."/>
            <person name="Poustka A."/>
            <person name="Wiemann S."/>
            <person name="Schupp I."/>
        </authorList>
    </citation>
    <scope>NUCLEOTIDE SEQUENCE [LARGE SCALE MRNA]</scope>
    <source>
        <tissue>Retina</tissue>
    </source>
</reference>
<reference key="6">
    <citation type="journal article" date="2006" name="Nature">
        <title>The DNA sequence and biological annotation of human chromosome 1.</title>
        <authorList>
            <person name="Gregory S.G."/>
            <person name="Barlow K.F."/>
            <person name="McLay K.E."/>
            <person name="Kaul R."/>
            <person name="Swarbreck D."/>
            <person name="Dunham A."/>
            <person name="Scott C.E."/>
            <person name="Howe K.L."/>
            <person name="Woodfine K."/>
            <person name="Spencer C.C.A."/>
            <person name="Jones M.C."/>
            <person name="Gillson C."/>
            <person name="Searle S."/>
            <person name="Zhou Y."/>
            <person name="Kokocinski F."/>
            <person name="McDonald L."/>
            <person name="Evans R."/>
            <person name="Phillips K."/>
            <person name="Atkinson A."/>
            <person name="Cooper R."/>
            <person name="Jones C."/>
            <person name="Hall R.E."/>
            <person name="Andrews T.D."/>
            <person name="Lloyd C."/>
            <person name="Ainscough R."/>
            <person name="Almeida J.P."/>
            <person name="Ambrose K.D."/>
            <person name="Anderson F."/>
            <person name="Andrew R.W."/>
            <person name="Ashwell R.I.S."/>
            <person name="Aubin K."/>
            <person name="Babbage A.K."/>
            <person name="Bagguley C.L."/>
            <person name="Bailey J."/>
            <person name="Beasley H."/>
            <person name="Bethel G."/>
            <person name="Bird C.P."/>
            <person name="Bray-Allen S."/>
            <person name="Brown J.Y."/>
            <person name="Brown A.J."/>
            <person name="Buckley D."/>
            <person name="Burton J."/>
            <person name="Bye J."/>
            <person name="Carder C."/>
            <person name="Chapman J.C."/>
            <person name="Clark S.Y."/>
            <person name="Clarke G."/>
            <person name="Clee C."/>
            <person name="Cobley V."/>
            <person name="Collier R.E."/>
            <person name="Corby N."/>
            <person name="Coville G.J."/>
            <person name="Davies J."/>
            <person name="Deadman R."/>
            <person name="Dunn M."/>
            <person name="Earthrowl M."/>
            <person name="Ellington A.G."/>
            <person name="Errington H."/>
            <person name="Frankish A."/>
            <person name="Frankland J."/>
            <person name="French L."/>
            <person name="Garner P."/>
            <person name="Garnett J."/>
            <person name="Gay L."/>
            <person name="Ghori M.R.J."/>
            <person name="Gibson R."/>
            <person name="Gilby L.M."/>
            <person name="Gillett W."/>
            <person name="Glithero R.J."/>
            <person name="Grafham D.V."/>
            <person name="Griffiths C."/>
            <person name="Griffiths-Jones S."/>
            <person name="Grocock R."/>
            <person name="Hammond S."/>
            <person name="Harrison E.S.I."/>
            <person name="Hart E."/>
            <person name="Haugen E."/>
            <person name="Heath P.D."/>
            <person name="Holmes S."/>
            <person name="Holt K."/>
            <person name="Howden P.J."/>
            <person name="Hunt A.R."/>
            <person name="Hunt S.E."/>
            <person name="Hunter G."/>
            <person name="Isherwood J."/>
            <person name="James R."/>
            <person name="Johnson C."/>
            <person name="Johnson D."/>
            <person name="Joy A."/>
            <person name="Kay M."/>
            <person name="Kershaw J.K."/>
            <person name="Kibukawa M."/>
            <person name="Kimberley A.M."/>
            <person name="King A."/>
            <person name="Knights A.J."/>
            <person name="Lad H."/>
            <person name="Laird G."/>
            <person name="Lawlor S."/>
            <person name="Leongamornlert D.A."/>
            <person name="Lloyd D.M."/>
            <person name="Loveland J."/>
            <person name="Lovell J."/>
            <person name="Lush M.J."/>
            <person name="Lyne R."/>
            <person name="Martin S."/>
            <person name="Mashreghi-Mohammadi M."/>
            <person name="Matthews L."/>
            <person name="Matthews N.S.W."/>
            <person name="McLaren S."/>
            <person name="Milne S."/>
            <person name="Mistry S."/>
            <person name="Moore M.J.F."/>
            <person name="Nickerson T."/>
            <person name="O'Dell C.N."/>
            <person name="Oliver K."/>
            <person name="Palmeiri A."/>
            <person name="Palmer S.A."/>
            <person name="Parker A."/>
            <person name="Patel D."/>
            <person name="Pearce A.V."/>
            <person name="Peck A.I."/>
            <person name="Pelan S."/>
            <person name="Phelps K."/>
            <person name="Phillimore B.J."/>
            <person name="Plumb R."/>
            <person name="Rajan J."/>
            <person name="Raymond C."/>
            <person name="Rouse G."/>
            <person name="Saenphimmachak C."/>
            <person name="Sehra H.K."/>
            <person name="Sheridan E."/>
            <person name="Shownkeen R."/>
            <person name="Sims S."/>
            <person name="Skuce C.D."/>
            <person name="Smith M."/>
            <person name="Steward C."/>
            <person name="Subramanian S."/>
            <person name="Sycamore N."/>
            <person name="Tracey A."/>
            <person name="Tromans A."/>
            <person name="Van Helmond Z."/>
            <person name="Wall M."/>
            <person name="Wallis J.M."/>
            <person name="White S."/>
            <person name="Whitehead S.L."/>
            <person name="Wilkinson J.E."/>
            <person name="Willey D.L."/>
            <person name="Williams H."/>
            <person name="Wilming L."/>
            <person name="Wray P.W."/>
            <person name="Wu Z."/>
            <person name="Coulson A."/>
            <person name="Vaudin M."/>
            <person name="Sulston J.E."/>
            <person name="Durbin R.M."/>
            <person name="Hubbard T."/>
            <person name="Wooster R."/>
            <person name="Dunham I."/>
            <person name="Carter N.P."/>
            <person name="McVean G."/>
            <person name="Ross M.T."/>
            <person name="Harrow J."/>
            <person name="Olson M.V."/>
            <person name="Beck S."/>
            <person name="Rogers J."/>
            <person name="Bentley D.R."/>
        </authorList>
    </citation>
    <scope>NUCLEOTIDE SEQUENCE [LARGE SCALE GENOMIC DNA]</scope>
</reference>
<reference key="7">
    <citation type="journal article" date="2004" name="Genome Res.">
        <title>The status, quality, and expansion of the NIH full-length cDNA project: the Mammalian Gene Collection (MGC).</title>
        <authorList>
            <consortium name="The MGC Project Team"/>
        </authorList>
    </citation>
    <scope>NUCLEOTIDE SEQUENCE [LARGE SCALE MRNA]</scope>
    <source>
        <tissue>Brain</tissue>
        <tissue>Colon</tissue>
        <tissue>Eye</tissue>
        <tissue>Muscle</tissue>
        <tissue>Testis</tissue>
    </source>
</reference>
<reference key="8">
    <citation type="journal article" date="2002" name="Biochemistry (Mosc.)">
        <title>Glutamine synthetase isolated from human brain: octameric structure and homology of partial primary structure with human liver glutamine synthetase.</title>
        <authorList>
            <person name="Boksha I.S."/>
            <person name="Schonfeld H.J."/>
            <person name="Langen H."/>
            <person name="Muller F."/>
            <person name="Tereshkina E.B."/>
            <person name="Burbaeva G.S.H."/>
        </authorList>
    </citation>
    <scope>SUBUNIT</scope>
    <scope>IDENTIFICATION BY MASS SPECTROMETRY</scope>
    <source>
        <tissue>Brain</tissue>
    </source>
</reference>
<reference key="9">
    <citation type="journal article" date="2008" name="Arch. Biochem. Biophys.">
        <title>Glutamine synthetase is essential for proliferation of fetal skin fibroblasts.</title>
        <authorList>
            <person name="Vermeulen T."/>
            <person name="Goerg B."/>
            <person name="Vogl T."/>
            <person name="Wolf M."/>
            <person name="Varga G."/>
            <person name="Toutain A."/>
            <person name="Paul R."/>
            <person name="Schliess F."/>
            <person name="Haeussinger D."/>
            <person name="Haeberle J."/>
        </authorList>
    </citation>
    <scope>FUNCTION</scope>
    <scope>DEVELOPMENTAL STAGE</scope>
</reference>
<reference key="10">
    <citation type="journal article" date="2008" name="Bone">
        <title>Wnt and steroid pathways control glutamate signalling by regulating glutamine synthetase activity in osteoblastic cells.</title>
        <authorList>
            <person name="Olkku A."/>
            <person name="Mahonen A."/>
        </authorList>
    </citation>
    <scope>INDUCTION</scope>
</reference>
<reference key="11">
    <citation type="journal article" date="2009" name="Anal. Chem.">
        <title>Lys-N and trypsin cover complementary parts of the phosphoproteome in a refined SCX-based approach.</title>
        <authorList>
            <person name="Gauci S."/>
            <person name="Helbig A.O."/>
            <person name="Slijper M."/>
            <person name="Krijgsveld J."/>
            <person name="Heck A.J."/>
            <person name="Mohammed S."/>
        </authorList>
    </citation>
    <scope>ACETYLATION [LARGE SCALE ANALYSIS] AT THR-2</scope>
    <scope>CLEAVAGE OF INITIATOR METHIONINE [LARGE SCALE ANALYSIS]</scope>
    <scope>IDENTIFICATION BY MASS SPECTROMETRY [LARGE SCALE ANALYSIS]</scope>
</reference>
<reference key="12">
    <citation type="journal article" date="2011" name="BMC Syst. Biol.">
        <title>Initial characterization of the human central proteome.</title>
        <authorList>
            <person name="Burkard T.R."/>
            <person name="Planyavsky M."/>
            <person name="Kaupe I."/>
            <person name="Breitwieser F.P."/>
            <person name="Buerckstuemmer T."/>
            <person name="Bennett K.L."/>
            <person name="Superti-Furga G."/>
            <person name="Colinge J."/>
        </authorList>
    </citation>
    <scope>IDENTIFICATION BY MASS SPECTROMETRY [LARGE SCALE ANALYSIS]</scope>
</reference>
<reference key="13">
    <citation type="journal article" date="2013" name="J. Proteome Res.">
        <title>Toward a comprehensive characterization of a human cancer cell phosphoproteome.</title>
        <authorList>
            <person name="Zhou H."/>
            <person name="Di Palma S."/>
            <person name="Preisinger C."/>
            <person name="Peng M."/>
            <person name="Polat A.N."/>
            <person name="Heck A.J."/>
            <person name="Mohammed S."/>
        </authorList>
    </citation>
    <scope>PHOSPHORYLATION [LARGE SCALE ANALYSIS] AT SER-343</scope>
    <scope>IDENTIFICATION BY MASS SPECTROMETRY [LARGE SCALE ANALYSIS]</scope>
    <source>
        <tissue>Erythroleukemia</tissue>
    </source>
</reference>
<reference key="14">
    <citation type="journal article" date="2014" name="J. Proteomics">
        <title>An enzyme assisted RP-RPLC approach for in-depth analysis of human liver phosphoproteome.</title>
        <authorList>
            <person name="Bian Y."/>
            <person name="Song C."/>
            <person name="Cheng K."/>
            <person name="Dong M."/>
            <person name="Wang F."/>
            <person name="Huang J."/>
            <person name="Sun D."/>
            <person name="Wang L."/>
            <person name="Ye M."/>
            <person name="Zou H."/>
        </authorList>
    </citation>
    <scope>PHOSPHORYLATION [LARGE SCALE ANALYSIS] AT SER-343</scope>
    <scope>IDENTIFICATION BY MASS SPECTROMETRY [LARGE SCALE ANALYSIS]</scope>
    <source>
        <tissue>Liver</tissue>
    </source>
</reference>
<reference key="15">
    <citation type="journal article" date="2015" name="Cell Rep.">
        <title>Genome-wide RNAi Screening Identifies Protein Modules Required for 40S Subunit Synthesis in Human Cells.</title>
        <authorList>
            <person name="Badertscher L."/>
            <person name="Wild T."/>
            <person name="Montellese C."/>
            <person name="Alexander L.T."/>
            <person name="Bammert L."/>
            <person name="Sarazova M."/>
            <person name="Stebler M."/>
            <person name="Csucs G."/>
            <person name="Mayer T.U."/>
            <person name="Zamboni N."/>
            <person name="Zemp I."/>
            <person name="Horvath P."/>
            <person name="Kutay U."/>
        </authorList>
    </citation>
    <scope>FUNCTION</scope>
    <scope>MUTAGENESIS OF ARG-324</scope>
    <scope>CHARACTERIZATION OF VARIANT GLND CYS-324</scope>
</reference>
<reference key="16">
    <citation type="journal article" date="2016" name="Mol. Cell">
        <title>Glutamine triggers acetylation-dependent degradation of glutamine synthetase via the thalidomide receptor cereblon.</title>
        <authorList>
            <person name="Nguyen T.V."/>
            <person name="Lee J.E."/>
            <person name="Sweredoski M.J."/>
            <person name="Yang S.J."/>
            <person name="Jeon S.J."/>
            <person name="Harrison J.S."/>
            <person name="Yim J.H."/>
            <person name="Lee S.G."/>
            <person name="Handa H."/>
            <person name="Kuhlman B."/>
            <person name="Jeong J.S."/>
            <person name="Reitsma J.M."/>
            <person name="Park C.S."/>
            <person name="Hess S."/>
            <person name="Deshaies R.J."/>
        </authorList>
    </citation>
    <scope>ACETYLATION AT LYS-11 AND LYS-14</scope>
    <scope>UBIQUITINATION BY CRL4(CRBN)</scope>
    <scope>INDUCTION</scope>
    <scope>MUTAGENESIS OF LYS-11 AND LYS-14</scope>
</reference>
<reference key="17">
    <citation type="journal article" date="2018" name="Nature">
        <title>Role of glutamine synthetase in angiogenesis beyond glutamine synthesis.</title>
        <authorList>
            <person name="Eelen G."/>
            <person name="Dubois C."/>
            <person name="Cantelmo A.R."/>
            <person name="Goveia J."/>
            <person name="Bruening U."/>
            <person name="DeRan M."/>
            <person name="Jarugumilli G."/>
            <person name="van Rijssel J."/>
            <person name="Saladino G."/>
            <person name="Comitani F."/>
            <person name="Zecchin A."/>
            <person name="Rocha S."/>
            <person name="Chen R."/>
            <person name="Huang H."/>
            <person name="Vandekeere S."/>
            <person name="Kalucka J."/>
            <person name="Lange C."/>
            <person name="Morales-Rodriguez F."/>
            <person name="Cruys B."/>
            <person name="Treps L."/>
            <person name="Ramer L."/>
            <person name="Vinckier S."/>
            <person name="Brepoels K."/>
            <person name="Wyns S."/>
            <person name="Souffreau J."/>
            <person name="Schoonjans L."/>
            <person name="Lamers W.H."/>
            <person name="Wu Y."/>
            <person name="Haustraete J."/>
            <person name="Hofkens J."/>
            <person name="Liekens S."/>
            <person name="Cubbon R."/>
            <person name="Ghesquiere B."/>
            <person name="Dewerchin M."/>
            <person name="Gervasio F.L."/>
            <person name="Li X."/>
            <person name="van Buul J.D."/>
            <person name="Wu X."/>
            <person name="Carmeliet P."/>
        </authorList>
    </citation>
    <scope>FUNCTION</scope>
    <scope>CATALYTIC ACTIVITY</scope>
    <scope>ACTIVITY REGULATION</scope>
    <scope>INTERACTION WITH RHOJ</scope>
    <scope>SUBCELLULAR LOCATION</scope>
    <scope>PALMITOYLATION</scope>
    <scope>TISSUE SPECIFICITY</scope>
    <scope>MUTAGENESIS OF CYS-209</scope>
</reference>
<reference key="18">
    <citation type="journal article" date="2022" name="Nature">
        <title>Bestrophin-2 and glutamine synthetase form a complex for glutamate release.</title>
        <authorList>
            <person name="Owji A.P."/>
            <person name="Yu K."/>
            <person name="Kittredge A."/>
            <person name="Wang J."/>
            <person name="Zhang Y."/>
            <person name="Yang T."/>
        </authorList>
    </citation>
    <scope>FUNCTION</scope>
    <scope>CATALYTIC ACTIVITY</scope>
    <scope>INTERACTION WITH BEST2</scope>
    <scope>SUBCELLULAR LOCATION</scope>
    <scope>MUTAGENESIS OF ARG-299</scope>
</reference>
<reference evidence="21 22" key="19">
    <citation type="journal article" date="2008" name="J. Mol. Biol.">
        <title>Crystal structures of mammalian glutamine synthetases illustrate substrate-induced conformational changes and provide opportunities for drug and herbicide design.</title>
        <authorList>
            <person name="Krajewski W.W."/>
            <person name="Collins R."/>
            <person name="Holmberg-Schiavone L."/>
            <person name="Jones T.A."/>
            <person name="Karlberg T."/>
            <person name="Mowbray S.L."/>
        </authorList>
    </citation>
    <scope>X-RAY CRYSTALLOGRAPHY (2.05 ANGSTROMS) OF 5-365 IN COMPLEX WITH ADP AND MANGANESE</scope>
    <scope>SUBUNIT</scope>
</reference>
<reference key="20">
    <citation type="journal article" date="2005" name="N. Engl. J. Med.">
        <title>Congenital glutamine deficiency with glutamine synthetase mutations.</title>
        <authorList>
            <person name="Haeberle J."/>
            <person name="Goerg B."/>
            <person name="Rutsch F."/>
            <person name="Schmidt E."/>
            <person name="Toutain A."/>
            <person name="Benoist J.-F."/>
            <person name="Gelot A."/>
            <person name="Suc A.-L."/>
            <person name="Hoehne W."/>
            <person name="Schliess F."/>
            <person name="Haeussinger D."/>
            <person name="Koch H.G."/>
        </authorList>
    </citation>
    <scope>VARIANTS GLND CYS-324 AND CYS-341</scope>
    <scope>CHARACTERIZATION OF VARIANTS GLND CYS-324 AND CYS-341</scope>
    <scope>FUNCTION</scope>
    <scope>CATALYTIC ACTIVITY</scope>
    <scope>INVOLVEMENT IN GLND</scope>
</reference>
<reference key="21">
    <citation type="journal article" date="2024" name="Am. J. Hum. Genet.">
        <title>Clustered de novo start-loss variants in GLUL result in a developmental and epileptic encephalopathy via stabilization of glutamine synthetase.</title>
        <authorList>
            <person name="Jones A.G."/>
            <person name="Aquilino M."/>
            <person name="Tinker R.J."/>
            <person name="Duncan L."/>
            <person name="Jenkins Z."/>
            <person name="Carvill G.L."/>
            <person name="DeWard S.J."/>
            <person name="Grange D.K."/>
            <person name="Hajianpour M.J."/>
            <person name="Halliday B.J."/>
            <person name="Holder-Espinasse M."/>
            <person name="Horvath J."/>
            <person name="Maitz S."/>
            <person name="Nigro V."/>
            <person name="Morleo M."/>
            <person name="Paul V."/>
            <person name="Spencer C."/>
            <person name="Esterhuizen A.I."/>
            <person name="Polster T."/>
            <person name="Spano A."/>
            <person name="Gomez-Lozano I."/>
            <person name="Kumar A."/>
            <person name="Poke G."/>
            <person name="Phillips J.A. III"/>
            <person name="Underhill H.R."/>
            <person name="Gimenez G."/>
            <person name="Namba T."/>
            <person name="Robertson S.P."/>
        </authorList>
    </citation>
    <scope>CHARACTERIZATION OF VARIANTS GLND CYS-324 AND CYS-341</scope>
    <scope>MUTAGENESIS OF 1-MET--TYR-17</scope>
    <scope>INDUCTION</scope>
    <scope>INVOLVEMENT IN DEE116</scope>
</reference>
<sequence length="373" mass="42064">MTTSASSHLNKGIKQVYMSLPQGEKVQAMYIWIDGTGEGLRCKTRTLDSEPKCVEELPEWNFDGSSTLQSEGSNSDMYLVPAAMFRDPFRKDPNKLVLCEVFKYNRRPAETNLRHTCKRIMDMVSNQHPWFGMEQEYTLMGTDGHPFGWPSNGFPGPQGPYYCGVGADRAYGRDIVEAHYRACLYAGVKIAGTNAEVMPAQWEFQIGPCEGISMGDHLWVARFILHRVCEDFGVIATFDPKPIPGNWNGAGCHTNFSTKAMREENGLKYIEEAIEKLSKRHQYHIRAYDPKGGLDNARRLTGFHETSNINDFSAGVANRSASIRIPRTVGQEKKGYFEDRRPSANCDPFSVTEALIRTCLLNETGDEPFQYKN</sequence>
<organism>
    <name type="scientific">Homo sapiens</name>
    <name type="common">Human</name>
    <dbReference type="NCBI Taxonomy" id="9606"/>
    <lineage>
        <taxon>Eukaryota</taxon>
        <taxon>Metazoa</taxon>
        <taxon>Chordata</taxon>
        <taxon>Craniata</taxon>
        <taxon>Vertebrata</taxon>
        <taxon>Euteleostomi</taxon>
        <taxon>Mammalia</taxon>
        <taxon>Eutheria</taxon>
        <taxon>Euarchontoglires</taxon>
        <taxon>Primates</taxon>
        <taxon>Haplorrhini</taxon>
        <taxon>Catarrhini</taxon>
        <taxon>Hominidae</taxon>
        <taxon>Homo</taxon>
    </lineage>
</organism>
<feature type="initiator methionine" description="Removed" evidence="23">
    <location>
        <position position="1"/>
    </location>
</feature>
<feature type="chain" id="PRO_0000153139" description="Glutamine synthetase">
    <location>
        <begin position="2"/>
        <end position="373"/>
    </location>
</feature>
<feature type="domain" description="GS beta-grasp" evidence="4">
    <location>
        <begin position="24"/>
        <end position="106"/>
    </location>
</feature>
<feature type="domain" description="GS catalytic" evidence="5">
    <location>
        <begin position="113"/>
        <end position="373"/>
    </location>
</feature>
<feature type="region of interest" description="Required for glutamine-induced ubiquitination by CRL4(CRBN) and proteasomal degradation" evidence="11 14">
    <location>
        <begin position="2"/>
        <end position="25"/>
    </location>
</feature>
<feature type="binding site" evidence="21 22">
    <location>
        <position position="134"/>
    </location>
    <ligand>
        <name>ATP</name>
        <dbReference type="ChEBI" id="CHEBI:30616"/>
    </ligand>
</feature>
<feature type="binding site" evidence="22">
    <location>
        <position position="134"/>
    </location>
    <ligand>
        <name>Mn(2+)</name>
        <dbReference type="ChEBI" id="CHEBI:29035"/>
        <label>1</label>
    </ligand>
</feature>
<feature type="binding site" evidence="22">
    <location>
        <position position="136"/>
    </location>
    <ligand>
        <name>Mn(2+)</name>
        <dbReference type="ChEBI" id="CHEBI:29035"/>
        <label>2</label>
    </ligand>
</feature>
<feature type="binding site" evidence="22">
    <location>
        <position position="196"/>
    </location>
    <ligand>
        <name>Mn(2+)</name>
        <dbReference type="ChEBI" id="CHEBI:29035"/>
        <label>2</label>
    </ligand>
</feature>
<feature type="binding site" evidence="21 22">
    <location>
        <begin position="203"/>
        <end position="208"/>
    </location>
    <ligand>
        <name>ATP</name>
        <dbReference type="ChEBI" id="CHEBI:30616"/>
    </ligand>
</feature>
<feature type="binding site" evidence="22">
    <location>
        <position position="203"/>
    </location>
    <ligand>
        <name>Mn(2+)</name>
        <dbReference type="ChEBI" id="CHEBI:29035"/>
        <label>2</label>
    </ligand>
</feature>
<feature type="binding site" evidence="3">
    <location>
        <begin position="246"/>
        <end position="247"/>
    </location>
    <ligand>
        <name>L-glutamate</name>
        <dbReference type="ChEBI" id="CHEBI:29985"/>
    </ligand>
</feature>
<feature type="binding site" evidence="22">
    <location>
        <position position="253"/>
    </location>
    <ligand>
        <name>Mn(2+)</name>
        <dbReference type="ChEBI" id="CHEBI:29035"/>
        <label>1</label>
    </ligand>
</feature>
<feature type="binding site" evidence="21 22">
    <location>
        <begin position="255"/>
        <end position="257"/>
    </location>
    <ligand>
        <name>ATP</name>
        <dbReference type="ChEBI" id="CHEBI:30616"/>
    </ligand>
</feature>
<feature type="binding site" evidence="21 22">
    <location>
        <position position="319"/>
    </location>
    <ligand>
        <name>ATP</name>
        <dbReference type="ChEBI" id="CHEBI:30616"/>
    </ligand>
</feature>
<feature type="binding site" evidence="3">
    <location>
        <position position="319"/>
    </location>
    <ligand>
        <name>L-glutamate</name>
        <dbReference type="ChEBI" id="CHEBI:29985"/>
    </ligand>
</feature>
<feature type="binding site" evidence="21 22">
    <location>
        <position position="324"/>
    </location>
    <ligand>
        <name>ATP</name>
        <dbReference type="ChEBI" id="CHEBI:30616"/>
    </ligand>
</feature>
<feature type="binding site" evidence="21 22">
    <location>
        <begin position="336"/>
        <end position="338"/>
    </location>
    <ligand>
        <name>ADP</name>
        <dbReference type="ChEBI" id="CHEBI:456216"/>
    </ligand>
</feature>
<feature type="binding site" evidence="22">
    <location>
        <position position="338"/>
    </location>
    <ligand>
        <name>Mn(2+)</name>
        <dbReference type="ChEBI" id="CHEBI:29035"/>
        <label>1</label>
    </ligand>
</feature>
<feature type="binding site" evidence="3">
    <location>
        <position position="340"/>
    </location>
    <ligand>
        <name>L-glutamate</name>
        <dbReference type="ChEBI" id="CHEBI:29985"/>
    </ligand>
</feature>
<feature type="modified residue" description="N-acetylthreonine" evidence="23">
    <location>
        <position position="2"/>
    </location>
</feature>
<feature type="modified residue" description="N6-acetyllysine; by EP300" evidence="11">
    <location>
        <position position="11"/>
    </location>
</feature>
<feature type="modified residue" description="N6-acetyllysine; by EP300" evidence="11">
    <location>
        <position position="14"/>
    </location>
</feature>
<feature type="modified residue" description="Phosphotyrosine" evidence="2">
    <location>
        <position position="104"/>
    </location>
</feature>
<feature type="modified residue" description="Phosphoserine" evidence="24 25">
    <location>
        <position position="343"/>
    </location>
</feature>
<feature type="sequence variant" id="VAR_026560" description="In GLND; reduced glutamine synthetase activity; decreased function in ribosomal 40S subunit synthesis associated with loss of nucleolar location of BYSL; dbSNP:rs80358214." evidence="6 10 14">
    <original>R</original>
    <variation>C</variation>
    <location>
        <position position="324"/>
    </location>
</feature>
<feature type="sequence variant" id="VAR_026561" description="In GLND; reduced glutamine synthetase activity; dbSNP:rs80358215." evidence="6 14">
    <original>R</original>
    <variation>C</variation>
    <location>
        <position position="341"/>
    </location>
</feature>
<feature type="mutagenesis site" description="Is stable in high glutamine conditions and does not undergo glutamine-induced degradation." evidence="14">
    <location>
        <begin position="2"/>
        <end position="17"/>
    </location>
</feature>
<feature type="mutagenesis site" description="Increased ubiquitination and increased proteasomal degradation; when associated with A-14." evidence="11">
    <original>K</original>
    <variation>A</variation>
    <location>
        <position position="11"/>
    </location>
</feature>
<feature type="mutagenesis site" description="Decreased glutamine-induced acetylation; when associated with R-14. Decreased ubiquitination and decreased proteasomal degradation; when associated with R-14." evidence="11">
    <original>K</original>
    <variation>R</variation>
    <location>
        <position position="11"/>
    </location>
</feature>
<feature type="mutagenesis site" description="Increased ubiquitination and increased proteasomal degradation; when associated with A-11." evidence="11">
    <original>K</original>
    <variation>A</variation>
    <location>
        <position position="14"/>
    </location>
</feature>
<feature type="mutagenesis site" description="Decreased glutamine-induced acetylation; when associated with R-11. Decreased ubiquitination and decreased proteasomal degradation; when associated with R-11." evidence="11">
    <original>K</original>
    <variation>R</variation>
    <location>
        <position position="14"/>
    </location>
</feature>
<feature type="mutagenesis site" description="Reduced ability to mediate autopalmitoylation." evidence="12">
    <original>C</original>
    <variation>A</variation>
    <location>
        <position position="209"/>
    </location>
</feature>
<feature type="mutagenesis site" description="Loss of glutamine synthase activity. Does not affect interaction with BEST2." evidence="13">
    <original>R</original>
    <variation>E</variation>
    <location>
        <position position="299"/>
    </location>
</feature>
<feature type="mutagenesis site" description="Decreases ribosomal 40S subunit synthesis. Loss of nucleolar location of BYSL." evidence="10">
    <original>R</original>
    <variation>A</variation>
    <location>
        <position position="324"/>
    </location>
</feature>
<feature type="sequence conflict" description="In Ref. 7; AAH31964." evidence="18" ref="7">
    <original>S</original>
    <variation>Y</variation>
    <location>
        <position position="7"/>
    </location>
</feature>
<feature type="sequence conflict" description="In Ref. 5; CAD97626." evidence="18" ref="5">
    <original>F</original>
    <variation>L</variation>
    <location>
        <position position="154"/>
    </location>
</feature>
<feature type="sequence conflict" description="In Ref. 7; AAH31964." evidence="18" ref="7">
    <original>P</original>
    <variation>T</variation>
    <location>
        <position position="155"/>
    </location>
</feature>
<feature type="sequence conflict" description="In Ref. 1; CAA68457." evidence="18" ref="1">
    <original>A</original>
    <variation>G</variation>
    <location>
        <position position="314"/>
    </location>
</feature>
<feature type="sequence conflict" description="In Ref. 2; CAA42495." evidence="18" ref="2">
    <original>SI</original>
    <variation>RL</variation>
    <location>
        <begin position="322"/>
        <end position="323"/>
    </location>
</feature>
<feature type="sequence conflict" description="In Ref. 2; CAA42495." evidence="18" ref="2">
    <original>D</original>
    <variation>E</variation>
    <location>
        <position position="347"/>
    </location>
</feature>
<feature type="helix" evidence="26">
    <location>
        <begin position="5"/>
        <end position="8"/>
    </location>
</feature>
<feature type="helix" evidence="26">
    <location>
        <begin position="11"/>
        <end position="18"/>
    </location>
</feature>
<feature type="strand" evidence="26">
    <location>
        <begin position="26"/>
        <end position="33"/>
    </location>
</feature>
<feature type="strand" evidence="29">
    <location>
        <begin position="35"/>
        <end position="38"/>
    </location>
</feature>
<feature type="strand" evidence="26">
    <location>
        <begin position="40"/>
        <end position="49"/>
    </location>
</feature>
<feature type="helix" evidence="26">
    <location>
        <begin position="54"/>
        <end position="56"/>
    </location>
</feature>
<feature type="strand" evidence="26">
    <location>
        <begin position="60"/>
        <end position="63"/>
    </location>
</feature>
<feature type="turn" evidence="26">
    <location>
        <begin position="64"/>
        <end position="68"/>
    </location>
</feature>
<feature type="strand" evidence="26">
    <location>
        <begin position="69"/>
        <end position="71"/>
    </location>
</feature>
<feature type="helix" evidence="27">
    <location>
        <begin position="72"/>
        <end position="74"/>
    </location>
</feature>
<feature type="strand" evidence="26">
    <location>
        <begin position="76"/>
        <end position="86"/>
    </location>
</feature>
<feature type="turn" evidence="26">
    <location>
        <begin position="88"/>
        <end position="90"/>
    </location>
</feature>
<feature type="strand" evidence="26">
    <location>
        <begin position="95"/>
        <end position="102"/>
    </location>
</feature>
<feature type="strand" evidence="27">
    <location>
        <begin position="106"/>
        <end position="108"/>
    </location>
</feature>
<feature type="helix" evidence="26">
    <location>
        <begin position="114"/>
        <end position="123"/>
    </location>
</feature>
<feature type="helix" evidence="26">
    <location>
        <begin position="124"/>
        <end position="127"/>
    </location>
</feature>
<feature type="strand" evidence="26">
    <location>
        <begin position="130"/>
        <end position="140"/>
    </location>
</feature>
<feature type="strand" evidence="27">
    <location>
        <begin position="144"/>
        <end position="146"/>
    </location>
</feature>
<feature type="strand" evidence="26">
    <location>
        <begin position="158"/>
        <end position="160"/>
    </location>
</feature>
<feature type="turn" evidence="26">
    <location>
        <begin position="167"/>
        <end position="169"/>
    </location>
</feature>
<feature type="helix" evidence="26">
    <location>
        <begin position="173"/>
        <end position="186"/>
    </location>
</feature>
<feature type="strand" evidence="26">
    <location>
        <begin position="190"/>
        <end position="195"/>
    </location>
</feature>
<feature type="strand" evidence="26">
    <location>
        <begin position="201"/>
        <end position="210"/>
    </location>
</feature>
<feature type="helix" evidence="26">
    <location>
        <begin position="213"/>
        <end position="232"/>
    </location>
</feature>
<feature type="strand" evidence="26">
    <location>
        <begin position="235"/>
        <end position="237"/>
    </location>
</feature>
<feature type="strand" evidence="28">
    <location>
        <begin position="240"/>
        <end position="243"/>
    </location>
</feature>
<feature type="strand" evidence="26">
    <location>
        <begin position="245"/>
        <end position="247"/>
    </location>
</feature>
<feature type="strand" evidence="26">
    <location>
        <begin position="251"/>
        <end position="257"/>
    </location>
</feature>
<feature type="helix" evidence="26">
    <location>
        <begin position="259"/>
        <end position="262"/>
    </location>
</feature>
<feature type="turn" evidence="26">
    <location>
        <begin position="264"/>
        <end position="266"/>
    </location>
</feature>
<feature type="helix" evidence="26">
    <location>
        <begin position="267"/>
        <end position="278"/>
    </location>
</feature>
<feature type="helix" evidence="26">
    <location>
        <begin position="281"/>
        <end position="287"/>
    </location>
</feature>
<feature type="turn" evidence="26">
    <location>
        <begin position="290"/>
        <end position="295"/>
    </location>
</feature>
<feature type="helix" evidence="26">
    <location>
        <begin position="296"/>
        <end position="298"/>
    </location>
</feature>
<feature type="strand" evidence="29">
    <location>
        <begin position="308"/>
        <end position="311"/>
    </location>
</feature>
<feature type="strand" evidence="26">
    <location>
        <begin position="314"/>
        <end position="316"/>
    </location>
</feature>
<feature type="strand" evidence="26">
    <location>
        <begin position="321"/>
        <end position="325"/>
    </location>
</feature>
<feature type="helix" evidence="26">
    <location>
        <begin position="327"/>
        <end position="332"/>
    </location>
</feature>
<feature type="strand" evidence="26">
    <location>
        <begin position="337"/>
        <end position="339"/>
    </location>
</feature>
<feature type="helix" evidence="26">
    <location>
        <begin position="348"/>
        <end position="359"/>
    </location>
</feature>
<feature type="strand" evidence="29">
    <location>
        <begin position="365"/>
        <end position="367"/>
    </location>
</feature>
<proteinExistence type="evidence at protein level"/>
<gene>
    <name evidence="17 20" type="primary">GLUL</name>
    <name type="synonym">GLNS</name>
</gene>
<keyword id="KW-0002">3D-structure</keyword>
<keyword id="KW-0007">Acetylation</keyword>
<keyword id="KW-0037">Angiogenesis</keyword>
<keyword id="KW-0067">ATP-binding</keyword>
<keyword id="KW-1003">Cell membrane</keyword>
<keyword id="KW-0963">Cytoplasm</keyword>
<keyword id="KW-0225">Disease variant</keyword>
<keyword id="KW-0256">Endoplasmic reticulum</keyword>
<keyword id="KW-0887">Epilepsy</keyword>
<keyword id="KW-0991">Intellectual disability</keyword>
<keyword id="KW-0436">Ligase</keyword>
<keyword id="KW-0449">Lipoprotein</keyword>
<keyword id="KW-0460">Magnesium</keyword>
<keyword id="KW-0464">Manganese</keyword>
<keyword id="KW-0472">Membrane</keyword>
<keyword id="KW-0479">Metal-binding</keyword>
<keyword id="KW-0492">Microsome</keyword>
<keyword id="KW-0496">Mitochondrion</keyword>
<keyword id="KW-0547">Nucleotide-binding</keyword>
<keyword id="KW-0564">Palmitate</keyword>
<keyword id="KW-0597">Phosphoprotein</keyword>
<keyword id="KW-1267">Proteomics identification</keyword>
<keyword id="KW-1185">Reference proteome</keyword>
<keyword id="KW-0808">Transferase</keyword>
<keyword id="KW-0832">Ubl conjugation</keyword>
<comment type="function">
    <text evidence="2 6 9 10 12 13">Glutamine synthetase that catalyzes the ATP-dependent conversion of glutamate and ammonia to glutamine (PubMed:16267323, PubMed:30158707, PubMed:36289327). Its role depends on tissue localization: in the brain, it regulates the levels of toxic ammonia and converts neurotoxic glutamate to harmless glutamine, whereas in the liver, it is one of the enzymes responsible for the removal of ammonia (By similarity). Plays a key role in ammonium detoxification during erythropoiesis: the glutamine synthetase activity is required to remove ammonium generated by porphobilinogen deaminase (HMBS) during heme biosynthesis to prevent ammonium accumulation and oxidative stress (By similarity). Essential for proliferation of fetal skin fibroblasts (PubMed:18662667). Independently of its glutamine synthetase activity, required for endothelial cell migration during vascular development: acts by regulating membrane localization and activation of the GTPase RHOJ, possibly by promoting RHOJ palmitoylation (PubMed:30158707). May act as a palmitoyltransferase for RHOJ: able to autopalmitoylate and then transfer the palmitoyl group to RHOJ (PubMed:30158707). Plays a role in ribosomal 40S subunit biogenesis (PubMed:26711351). Through the interaction with BEST2, inhibits BEST2 channel activity by affecting the gating at the aperture in the absence of intracellular L-glutamate, but sensitizes BEST2 to intracellular L-glutamate, which promotes the opening of BEST2 and thus relieves its inhibitory effect on BEST2 (PubMed:36289327).</text>
</comment>
<comment type="catalytic activity">
    <reaction evidence="6 12 13">
        <text>L-glutamate + NH4(+) + ATP = L-glutamine + ADP + phosphate + H(+)</text>
        <dbReference type="Rhea" id="RHEA:16169"/>
        <dbReference type="ChEBI" id="CHEBI:15378"/>
        <dbReference type="ChEBI" id="CHEBI:28938"/>
        <dbReference type="ChEBI" id="CHEBI:29985"/>
        <dbReference type="ChEBI" id="CHEBI:30616"/>
        <dbReference type="ChEBI" id="CHEBI:43474"/>
        <dbReference type="ChEBI" id="CHEBI:58359"/>
        <dbReference type="ChEBI" id="CHEBI:456216"/>
        <dbReference type="EC" id="6.3.1.2"/>
    </reaction>
</comment>
<comment type="catalytic activity">
    <reaction evidence="19">
        <text>L-cysteinyl-[protein] + hexadecanoyl-CoA = S-hexadecanoyl-L-cysteinyl-[protein] + CoA</text>
        <dbReference type="Rhea" id="RHEA:36683"/>
        <dbReference type="Rhea" id="RHEA-COMP:10131"/>
        <dbReference type="Rhea" id="RHEA-COMP:11032"/>
        <dbReference type="ChEBI" id="CHEBI:29950"/>
        <dbReference type="ChEBI" id="CHEBI:57287"/>
        <dbReference type="ChEBI" id="CHEBI:57379"/>
        <dbReference type="ChEBI" id="CHEBI:74151"/>
        <dbReference type="EC" id="2.3.1.225"/>
    </reaction>
</comment>
<comment type="cofactor">
    <cofactor evidence="1">
        <name>Mg(2+)</name>
        <dbReference type="ChEBI" id="CHEBI:18420"/>
    </cofactor>
    <cofactor evidence="7">
        <name>Mn(2+)</name>
        <dbReference type="ChEBI" id="CHEBI:29035"/>
    </cofactor>
</comment>
<comment type="activity regulation">
    <text evidence="12">Glutamine synthetase activity is inhibited by methionine sulfoximine (MSO) (PubMed:30158707).</text>
</comment>
<comment type="subunit">
    <text evidence="2 7 12 13">Decamer; composed of two pentamers (PubMed:18005987). Interacts with PALMD (By similarity). Interacts with RHOJ (PubMed:30158707). Interacts with BEST2; this interaction tethers a fraction of GLUL to the membrane, causing a decrease of cytosolic glutamine synthase (GS) activity and inhibits the chloride channel activity of BEST2 by affecting the gating at the aperture in the absence of intracellular glutamate (PubMed:36289327).</text>
</comment>
<comment type="interaction">
    <interactant intactId="EBI-746653">
        <id>P15104</id>
    </interactant>
    <interactant intactId="EBI-746653">
        <id>P15104</id>
        <label>GLUL</label>
    </interactant>
    <organismsDiffer>false</organismsDiffer>
    <experiments>6</experiments>
</comment>
<comment type="interaction">
    <interactant intactId="EBI-746653">
        <id>P15104</id>
    </interactant>
    <interactant intactId="EBI-6285694">
        <id>Q9H4E5</id>
        <label>RHOJ</label>
    </interactant>
    <organismsDiffer>false</organismsDiffer>
    <experiments>2</experiments>
</comment>
<comment type="interaction">
    <interactant intactId="EBI-746653">
        <id>P15104</id>
    </interactant>
    <interactant intactId="EBI-20738368">
        <id>Q9H4E5-1</id>
        <label>RHOJ</label>
    </interactant>
    <organismsDiffer>false</organismsDiffer>
    <experiments>2</experiments>
</comment>
<comment type="interaction">
    <interactant intactId="EBI-746653">
        <id>P15104</id>
    </interactant>
    <interactant intactId="EBI-12046643">
        <id>P17735</id>
        <label>TAT</label>
    </interactant>
    <organismsDiffer>false</organismsDiffer>
    <experiments>3</experiments>
</comment>
<comment type="interaction">
    <interactant intactId="EBI-746653">
        <id>P15104</id>
    </interactant>
    <interactant intactId="EBI-6050648">
        <id>B4URF7</id>
        <label>PB2</label>
    </interactant>
    <organismsDiffer>true</organismsDiffer>
    <experiments>2</experiments>
</comment>
<comment type="subcellular location">
    <subcellularLocation>
        <location evidence="12 13">Cytoplasm</location>
        <location evidence="12 13">Cytosol</location>
    </subcellularLocation>
    <subcellularLocation>
        <location evidence="1">Microsome</location>
    </subcellularLocation>
    <subcellularLocation>
        <location evidence="1">Mitochondrion</location>
    </subcellularLocation>
    <subcellularLocation>
        <location evidence="12">Cell membrane</location>
        <topology evidence="12">Lipid-anchor</topology>
    </subcellularLocation>
    <text evidence="12">Mainly localizes in the cytosol, with a fraction associated with the cell membrane.</text>
</comment>
<comment type="tissue specificity">
    <text evidence="12">Expressed in endothelial cells.</text>
</comment>
<comment type="developmental stage">
    <text evidence="9">Expressed during early fetal stages.</text>
</comment>
<comment type="induction">
    <text evidence="8 11 14">By glucocorticoids. Vitamin D and the Wnt signaling pathway inhibit its expression and activity (PubMed:18555765). Glutamine synthase (GS) levels are regulated by a negative feedback mechanism where elevated glutamine levels stimulate GS ubiquitin-mediated proteasomal degradation (PubMed:26990986, PubMed:38579670).</text>
</comment>
<comment type="PTM">
    <text evidence="11">Acetylated by EP300/p300; acetylation is stimulated by increased glutamine levels and promotes ubiquitin-mediated proteasomal degradation.</text>
</comment>
<comment type="PTM">
    <text evidence="19">Palmitoylated; undergoes autopalmitoylation.</text>
</comment>
<comment type="PTM">
    <text evidence="2 11">Ubiquitinated by ZNRF1 (By similarity). Ubiquitinated by the DCX (DDB1-CUL4-X-box) E3 ubiquitin-protein ligase complex called CRL4(CRBN), leading to proteasomal degradation (PubMed:26990986).</text>
</comment>
<comment type="disease" evidence="6 10 14">
    <disease id="DI-01420">
        <name>Glutamine deficiency, congenital</name>
        <acronym>GLND</acronym>
        <description>An autosomal recessive disorder characterized by variable brain malformations, encephalopathy, severe developmental delay, seizures, and decreased glutamine levels in bodily fluids. Death in early infancy may occur.</description>
        <dbReference type="MIM" id="610015"/>
    </disease>
    <text>The disease is caused by variants affecting the gene represented in this entry.</text>
</comment>
<comment type="disease" evidence="14">
    <disease id="DI-06891">
        <name>Developmental and epileptic encephalopathy 116</name>
        <acronym>DEE116</acronym>
        <description>A form of epileptic encephalopathy, a heterogeneous group of early-onset epilepsies characterized by refractory seizures, neurodevelopmental impairment, and poor prognosis. Development is normal prior to seizure onset, after which cognitive and motor delays become apparent. DEE116 is autosomal dominant form characterized by severe developmental delay, seizures, and white matter abnormalities.</description>
        <dbReference type="MIM" id="620806"/>
    </disease>
    <text evidence="14">The disease is caused by variants affecting the gene represented in this entry. DEE116 is caused by variants that disrupt the canonical translation start codon in GLUL resulting in initiation of translation at Met-18 (PubMed:38579670). The resulting protein is enzymatically competent but insensitive to negative feedback regulation via glutamine-induced degradation.</text>
</comment>
<comment type="similarity">
    <text evidence="18">Belongs to the glutamine synthetase family.</text>
</comment>
<comment type="online information" name="Wikipedia">
    <link uri="https://en.wikipedia.org/wiki/Glutamine_synthetase"/>
    <text>Glutamine synthetase entry</text>
</comment>
<evidence type="ECO:0000250" key="1">
    <source>
        <dbReference type="UniProtKB" id="P09606"/>
    </source>
</evidence>
<evidence type="ECO:0000250" key="2">
    <source>
        <dbReference type="UniProtKB" id="P15105"/>
    </source>
</evidence>
<evidence type="ECO:0000250" key="3">
    <source>
        <dbReference type="UniProtKB" id="P9WN39"/>
    </source>
</evidence>
<evidence type="ECO:0000255" key="4">
    <source>
        <dbReference type="PROSITE-ProRule" id="PRU01330"/>
    </source>
</evidence>
<evidence type="ECO:0000255" key="5">
    <source>
        <dbReference type="PROSITE-ProRule" id="PRU01331"/>
    </source>
</evidence>
<evidence type="ECO:0000269" key="6">
    <source>
    </source>
</evidence>
<evidence type="ECO:0000269" key="7">
    <source>
    </source>
</evidence>
<evidence type="ECO:0000269" key="8">
    <source>
    </source>
</evidence>
<evidence type="ECO:0000269" key="9">
    <source>
    </source>
</evidence>
<evidence type="ECO:0000269" key="10">
    <source>
    </source>
</evidence>
<evidence type="ECO:0000269" key="11">
    <source>
    </source>
</evidence>
<evidence type="ECO:0000269" key="12">
    <source>
    </source>
</evidence>
<evidence type="ECO:0000269" key="13">
    <source>
    </source>
</evidence>
<evidence type="ECO:0000269" key="14">
    <source>
    </source>
</evidence>
<evidence type="ECO:0000303" key="15">
    <source>
    </source>
</evidence>
<evidence type="ECO:0000303" key="16">
    <source>
    </source>
</evidence>
<evidence type="ECO:0000303" key="17">
    <source>
    </source>
</evidence>
<evidence type="ECO:0000305" key="18"/>
<evidence type="ECO:0000305" key="19">
    <source>
    </source>
</evidence>
<evidence type="ECO:0000312" key="20">
    <source>
        <dbReference type="HGNC" id="HGNC:4341"/>
    </source>
</evidence>
<evidence type="ECO:0007744" key="21">
    <source>
        <dbReference type="PDB" id="2OJW"/>
    </source>
</evidence>
<evidence type="ECO:0007744" key="22">
    <source>
        <dbReference type="PDB" id="2QC8"/>
    </source>
</evidence>
<evidence type="ECO:0007744" key="23">
    <source>
    </source>
</evidence>
<evidence type="ECO:0007744" key="24">
    <source>
    </source>
</evidence>
<evidence type="ECO:0007744" key="25">
    <source>
    </source>
</evidence>
<evidence type="ECO:0007829" key="26">
    <source>
        <dbReference type="PDB" id="2OJW"/>
    </source>
</evidence>
<evidence type="ECO:0007829" key="27">
    <source>
        <dbReference type="PDB" id="2QC8"/>
    </source>
</evidence>
<evidence type="ECO:0007829" key="28">
    <source>
        <dbReference type="PDB" id="7EVT"/>
    </source>
</evidence>
<evidence type="ECO:0007829" key="29">
    <source>
        <dbReference type="PDB" id="8DNU"/>
    </source>
</evidence>
<protein>
    <recommendedName>
        <fullName evidence="16 17">Glutamine synthetase</fullName>
        <shortName evidence="15 17">GS</shortName>
        <ecNumber evidence="12">6.3.1.2</ecNumber>
    </recommendedName>
    <alternativeName>
        <fullName evidence="18">Glutamate--ammonia ligase</fullName>
    </alternativeName>
    <alternativeName>
        <fullName evidence="18">Palmitoyltransferase GLUL</fullName>
        <ecNumber evidence="19">2.3.1.225</ecNumber>
    </alternativeName>
</protein>
<accession>P15104</accession>
<accession>Q499Y9</accession>
<accession>Q5T9Z1</accession>
<accession>Q7Z3W4</accession>
<accession>Q8IZ17</accession>
<name>GLNA_HUMAN</name>